<name>AP3B_SCHPO</name>
<comment type="function">
    <text evidence="1">Adaptins are components of the adaptor complexes which link clathrin to receptors in coated vesicles. Clathrin-associated protein complexes are believed to interact with the cytoplasmic tails of membrane proteins, leading to their selection and concentration. Beta adaptin is a subunit of the plasma membrane adaptor (By similarity).</text>
</comment>
<comment type="subunit">
    <text evidence="1">Adaptor protein complex 3 (AP-3) is a heterotetramer composed of 2 large adaptins (apl5 and apl6), a medium adaptin (apm3) and a small adaptin (aps3).</text>
</comment>
<comment type="subcellular location">
    <subcellularLocation>
        <location evidence="2">Golgi apparatus</location>
    </subcellularLocation>
    <subcellularLocation>
        <location evidence="2">Cytoplasmic vesicle</location>
        <location evidence="2">Clathrin-coated vesicle membrane</location>
        <topology evidence="2">Peripheral membrane protein</topology>
        <orientation evidence="2">Cytoplasmic side</orientation>
    </subcellularLocation>
    <text evidence="2">Component of the coat surrounding the cytoplasmic face of coated vesicles located at the Golgi complex.</text>
</comment>
<comment type="similarity">
    <text evidence="5">Belongs to the adaptor complexes large subunit family.</text>
</comment>
<feature type="chain" id="PRO_0000193756" description="AP-3 complex subunit beta">
    <location>
        <begin position="1"/>
        <end position="745"/>
    </location>
</feature>
<feature type="region of interest" description="Disordered" evidence="3">
    <location>
        <begin position="674"/>
        <end position="745"/>
    </location>
</feature>
<feature type="compositionally biased region" description="Acidic residues" evidence="3">
    <location>
        <begin position="680"/>
        <end position="718"/>
    </location>
</feature>
<feature type="modified residue" description="Phosphoserine" evidence="4">
    <location>
        <position position="638"/>
    </location>
</feature>
<dbReference type="EMBL" id="CU329670">
    <property type="protein sequence ID" value="CAB16234.1"/>
    <property type="molecule type" value="Genomic_DNA"/>
</dbReference>
<dbReference type="PIR" id="T38299">
    <property type="entry name" value="T38299"/>
</dbReference>
<dbReference type="RefSeq" id="NP_593796.1">
    <property type="nucleotide sequence ID" value="NM_001019225.2"/>
</dbReference>
<dbReference type="SMR" id="O13939"/>
<dbReference type="BioGRID" id="278265">
    <property type="interactions" value="28"/>
</dbReference>
<dbReference type="FunCoup" id="O13939">
    <property type="interactions" value="323"/>
</dbReference>
<dbReference type="IntAct" id="O13939">
    <property type="interactions" value="1"/>
</dbReference>
<dbReference type="STRING" id="284812.O13939"/>
<dbReference type="iPTMnet" id="O13939"/>
<dbReference type="PaxDb" id="4896-SPAC23H3.06.1"/>
<dbReference type="EnsemblFungi" id="SPAC23H3.06.1">
    <property type="protein sequence ID" value="SPAC23H3.06.1:pep"/>
    <property type="gene ID" value="SPAC23H3.06"/>
</dbReference>
<dbReference type="GeneID" id="2541771"/>
<dbReference type="KEGG" id="spo:2541771"/>
<dbReference type="PomBase" id="SPAC23H3.06">
    <property type="gene designation" value="apl6"/>
</dbReference>
<dbReference type="VEuPathDB" id="FungiDB:SPAC23H3.06"/>
<dbReference type="eggNOG" id="KOG1060">
    <property type="taxonomic scope" value="Eukaryota"/>
</dbReference>
<dbReference type="HOGENOM" id="CLU_006320_3_2_1"/>
<dbReference type="InParanoid" id="O13939"/>
<dbReference type="OMA" id="HFLVRST"/>
<dbReference type="PhylomeDB" id="O13939"/>
<dbReference type="PRO" id="PR:O13939"/>
<dbReference type="Proteomes" id="UP000002485">
    <property type="component" value="Chromosome I"/>
</dbReference>
<dbReference type="GO" id="GO:0030123">
    <property type="term" value="C:AP-3 adaptor complex"/>
    <property type="evidence" value="ECO:0000266"/>
    <property type="project" value="PomBase"/>
</dbReference>
<dbReference type="GO" id="GO:0030665">
    <property type="term" value="C:clathrin-coated vesicle membrane"/>
    <property type="evidence" value="ECO:0007669"/>
    <property type="project" value="UniProtKB-SubCell"/>
</dbReference>
<dbReference type="GO" id="GO:0005829">
    <property type="term" value="C:cytosol"/>
    <property type="evidence" value="ECO:0007005"/>
    <property type="project" value="PomBase"/>
</dbReference>
<dbReference type="GO" id="GO:0005794">
    <property type="term" value="C:Golgi apparatus"/>
    <property type="evidence" value="ECO:0007669"/>
    <property type="project" value="UniProtKB-SubCell"/>
</dbReference>
<dbReference type="GO" id="GO:0005634">
    <property type="term" value="C:nucleus"/>
    <property type="evidence" value="ECO:0007005"/>
    <property type="project" value="PomBase"/>
</dbReference>
<dbReference type="GO" id="GO:0006896">
    <property type="term" value="P:Golgi to vacuole transport"/>
    <property type="evidence" value="ECO:0000266"/>
    <property type="project" value="PomBase"/>
</dbReference>
<dbReference type="GO" id="GO:0006886">
    <property type="term" value="P:intracellular protein transport"/>
    <property type="evidence" value="ECO:0000303"/>
    <property type="project" value="PomBase"/>
</dbReference>
<dbReference type="Gene3D" id="1.25.10.10">
    <property type="entry name" value="Leucine-rich Repeat Variant"/>
    <property type="match status" value="1"/>
</dbReference>
<dbReference type="InterPro" id="IPR026739">
    <property type="entry name" value="AP_beta"/>
</dbReference>
<dbReference type="InterPro" id="IPR011989">
    <property type="entry name" value="ARM-like"/>
</dbReference>
<dbReference type="InterPro" id="IPR016024">
    <property type="entry name" value="ARM-type_fold"/>
</dbReference>
<dbReference type="InterPro" id="IPR002553">
    <property type="entry name" value="Clathrin/coatomer_adapt-like_N"/>
</dbReference>
<dbReference type="PANTHER" id="PTHR11134">
    <property type="entry name" value="ADAPTOR COMPLEX SUBUNIT BETA FAMILY MEMBER"/>
    <property type="match status" value="1"/>
</dbReference>
<dbReference type="Pfam" id="PF01602">
    <property type="entry name" value="Adaptin_N"/>
    <property type="match status" value="1"/>
</dbReference>
<dbReference type="SUPFAM" id="SSF48371">
    <property type="entry name" value="ARM repeat"/>
    <property type="match status" value="1"/>
</dbReference>
<gene>
    <name type="primary">apl6</name>
    <name type="ORF">SPAC23H3.06</name>
</gene>
<keyword id="KW-0968">Cytoplasmic vesicle</keyword>
<keyword id="KW-0333">Golgi apparatus</keyword>
<keyword id="KW-0472">Membrane</keyword>
<keyword id="KW-0597">Phosphoprotein</keyword>
<keyword id="KW-0653">Protein transport</keyword>
<keyword id="KW-1185">Reference proteome</keyword>
<keyword id="KW-0813">Transport</keyword>
<reference key="1">
    <citation type="journal article" date="2002" name="Nature">
        <title>The genome sequence of Schizosaccharomyces pombe.</title>
        <authorList>
            <person name="Wood V."/>
            <person name="Gwilliam R."/>
            <person name="Rajandream M.A."/>
            <person name="Lyne M.H."/>
            <person name="Lyne R."/>
            <person name="Stewart A."/>
            <person name="Sgouros J.G."/>
            <person name="Peat N."/>
            <person name="Hayles J."/>
            <person name="Baker S.G."/>
            <person name="Basham D."/>
            <person name="Bowman S."/>
            <person name="Brooks K."/>
            <person name="Brown D."/>
            <person name="Brown S."/>
            <person name="Chillingworth T."/>
            <person name="Churcher C.M."/>
            <person name="Collins M."/>
            <person name="Connor R."/>
            <person name="Cronin A."/>
            <person name="Davis P."/>
            <person name="Feltwell T."/>
            <person name="Fraser A."/>
            <person name="Gentles S."/>
            <person name="Goble A."/>
            <person name="Hamlin N."/>
            <person name="Harris D.E."/>
            <person name="Hidalgo J."/>
            <person name="Hodgson G."/>
            <person name="Holroyd S."/>
            <person name="Hornsby T."/>
            <person name="Howarth S."/>
            <person name="Huckle E.J."/>
            <person name="Hunt S."/>
            <person name="Jagels K."/>
            <person name="James K.D."/>
            <person name="Jones L."/>
            <person name="Jones M."/>
            <person name="Leather S."/>
            <person name="McDonald S."/>
            <person name="McLean J."/>
            <person name="Mooney P."/>
            <person name="Moule S."/>
            <person name="Mungall K.L."/>
            <person name="Murphy L.D."/>
            <person name="Niblett D."/>
            <person name="Odell C."/>
            <person name="Oliver K."/>
            <person name="O'Neil S."/>
            <person name="Pearson D."/>
            <person name="Quail M.A."/>
            <person name="Rabbinowitsch E."/>
            <person name="Rutherford K.M."/>
            <person name="Rutter S."/>
            <person name="Saunders D."/>
            <person name="Seeger K."/>
            <person name="Sharp S."/>
            <person name="Skelton J."/>
            <person name="Simmonds M.N."/>
            <person name="Squares R."/>
            <person name="Squares S."/>
            <person name="Stevens K."/>
            <person name="Taylor K."/>
            <person name="Taylor R.G."/>
            <person name="Tivey A."/>
            <person name="Walsh S.V."/>
            <person name="Warren T."/>
            <person name="Whitehead S."/>
            <person name="Woodward J.R."/>
            <person name="Volckaert G."/>
            <person name="Aert R."/>
            <person name="Robben J."/>
            <person name="Grymonprez B."/>
            <person name="Weltjens I."/>
            <person name="Vanstreels E."/>
            <person name="Rieger M."/>
            <person name="Schaefer M."/>
            <person name="Mueller-Auer S."/>
            <person name="Gabel C."/>
            <person name="Fuchs M."/>
            <person name="Duesterhoeft A."/>
            <person name="Fritzc C."/>
            <person name="Holzer E."/>
            <person name="Moestl D."/>
            <person name="Hilbert H."/>
            <person name="Borzym K."/>
            <person name="Langer I."/>
            <person name="Beck A."/>
            <person name="Lehrach H."/>
            <person name="Reinhardt R."/>
            <person name="Pohl T.M."/>
            <person name="Eger P."/>
            <person name="Zimmermann W."/>
            <person name="Wedler H."/>
            <person name="Wambutt R."/>
            <person name="Purnelle B."/>
            <person name="Goffeau A."/>
            <person name="Cadieu E."/>
            <person name="Dreano S."/>
            <person name="Gloux S."/>
            <person name="Lelaure V."/>
            <person name="Mottier S."/>
            <person name="Galibert F."/>
            <person name="Aves S.J."/>
            <person name="Xiang Z."/>
            <person name="Hunt C."/>
            <person name="Moore K."/>
            <person name="Hurst S.M."/>
            <person name="Lucas M."/>
            <person name="Rochet M."/>
            <person name="Gaillardin C."/>
            <person name="Tallada V.A."/>
            <person name="Garzon A."/>
            <person name="Thode G."/>
            <person name="Daga R.R."/>
            <person name="Cruzado L."/>
            <person name="Jimenez J."/>
            <person name="Sanchez M."/>
            <person name="del Rey F."/>
            <person name="Benito J."/>
            <person name="Dominguez A."/>
            <person name="Revuelta J.L."/>
            <person name="Moreno S."/>
            <person name="Armstrong J."/>
            <person name="Forsburg S.L."/>
            <person name="Cerutti L."/>
            <person name="Lowe T."/>
            <person name="McCombie W.R."/>
            <person name="Paulsen I."/>
            <person name="Potashkin J."/>
            <person name="Shpakovski G.V."/>
            <person name="Ussery D."/>
            <person name="Barrell B.G."/>
            <person name="Nurse P."/>
        </authorList>
    </citation>
    <scope>NUCLEOTIDE SEQUENCE [LARGE SCALE GENOMIC DNA]</scope>
    <source>
        <strain>972 / ATCC 24843</strain>
    </source>
</reference>
<reference key="2">
    <citation type="journal article" date="2008" name="J. Proteome Res.">
        <title>Phosphoproteome analysis of fission yeast.</title>
        <authorList>
            <person name="Wilson-Grady J.T."/>
            <person name="Villen J."/>
            <person name="Gygi S.P."/>
        </authorList>
    </citation>
    <scope>PHOSPHORYLATION [LARGE SCALE ANALYSIS] AT SER-638</scope>
    <scope>IDENTIFICATION BY MASS SPECTROMETRY</scope>
</reference>
<organism>
    <name type="scientific">Schizosaccharomyces pombe (strain 972 / ATCC 24843)</name>
    <name type="common">Fission yeast</name>
    <dbReference type="NCBI Taxonomy" id="284812"/>
    <lineage>
        <taxon>Eukaryota</taxon>
        <taxon>Fungi</taxon>
        <taxon>Dikarya</taxon>
        <taxon>Ascomycota</taxon>
        <taxon>Taphrinomycotina</taxon>
        <taxon>Schizosaccharomycetes</taxon>
        <taxon>Schizosaccharomycetales</taxon>
        <taxon>Schizosaccharomycetaceae</taxon>
        <taxon>Schizosaccharomyces</taxon>
    </lineage>
</organism>
<proteinExistence type="evidence at protein level"/>
<sequence>MSNLSFFQTLSGLAENAKQIAKSSSLSFEENELSHSDLLRLLNSNSDAGKLEAINFILAQMMHGENMSLYFPDVVKLVASENPEIRRLVHIYLLQYAEFNPDLALLSVNTVQKTLYDKNPLTRSTAIRVMSSIRVPAINGIVLLAIQQCITDTADRVRQSAALAITKCYSLDPSYKSQLEEHIKTLLSDNSPIVVPAALFTFEVVCPEKLEIIHPYYHRICTLFPQMNDWDKVVALKTLVRYARLTLPEPSTPSTHSDLKELLESIKSCFFSLLPSTIIAGARAFYYLAPSNQMHLIVEPLLQLLLEKPIVRTTTLRYISQIVYKTPELFKNHIKSFFLIASDSDDTCLLKINILSRLLDAQNSSQILPELLYYINSHPNPSVASTAVKALGDFASANISMAPSCLNTLLLLLKSHNSLIVTEAASSLRLLIHNDPKEIYLQYLAATYETLEVPRAKSVTLWLISEHILIIPRLVPDVLRIAVKTFADETLEVKYQILELSVRLYVLSHSEEKQNDLESRDDVVSLLFNYVLSLIHFDMSYDLRDRARFYKELASTPSSEFTRRIVLESKGNSQKEIIASRDYCIGTASLCLNEDVMGYEPIPNWADVSDLPPDSVREGIKDVLPINPHTGNIYSNNSPGVKALSSDNFKRDFGDTNAINRPKFVGQQTLEEFYASETSESSEGEYETSTSESEDEETDDTSQEEDNEKNSTPDEDTENNNTSSISTKSIMDRPLTEPEPNYWQS</sequence>
<protein>
    <recommendedName>
        <fullName>AP-3 complex subunit beta</fullName>
    </recommendedName>
    <alternativeName>
        <fullName>Adaptor-related protein complex 3 subunit beta</fullName>
    </alternativeName>
    <alternativeName>
        <fullName>Beta-3-adaptin</fullName>
    </alternativeName>
    <alternativeName>
        <fullName>Clathrin assembly protein complex 3 beta large chain</fullName>
    </alternativeName>
    <alternativeName>
        <fullName>Clathrin assembly protein large beta chain</fullName>
    </alternativeName>
</protein>
<accession>O13939</accession>
<evidence type="ECO:0000250" key="1"/>
<evidence type="ECO:0000250" key="2">
    <source>
        <dbReference type="UniProtKB" id="P46682"/>
    </source>
</evidence>
<evidence type="ECO:0000256" key="3">
    <source>
        <dbReference type="SAM" id="MobiDB-lite"/>
    </source>
</evidence>
<evidence type="ECO:0000269" key="4">
    <source>
    </source>
</evidence>
<evidence type="ECO:0000305" key="5"/>